<name>IF11_NITV2</name>
<dbReference type="EMBL" id="AE017285">
    <property type="protein sequence ID" value="AAS94498.1"/>
    <property type="molecule type" value="Genomic_DNA"/>
</dbReference>
<dbReference type="RefSeq" id="WP_010937325.1">
    <property type="nucleotide sequence ID" value="NC_002937.3"/>
</dbReference>
<dbReference type="RefSeq" id="YP_009239.1">
    <property type="nucleotide sequence ID" value="NC_002937.3"/>
</dbReference>
<dbReference type="SMR" id="P61686"/>
<dbReference type="STRING" id="882.DVU_0014"/>
<dbReference type="PaxDb" id="882-DVU_0014"/>
<dbReference type="EnsemblBacteria" id="AAS94498">
    <property type="protein sequence ID" value="AAS94498"/>
    <property type="gene ID" value="DVU_0014"/>
</dbReference>
<dbReference type="KEGG" id="dvu:DVU_0014"/>
<dbReference type="PATRIC" id="fig|882.5.peg.13"/>
<dbReference type="eggNOG" id="COG0361">
    <property type="taxonomic scope" value="Bacteria"/>
</dbReference>
<dbReference type="HOGENOM" id="CLU_151267_1_0_7"/>
<dbReference type="OrthoDB" id="9803250at2"/>
<dbReference type="PhylomeDB" id="P61686"/>
<dbReference type="Proteomes" id="UP000002194">
    <property type="component" value="Chromosome"/>
</dbReference>
<dbReference type="GO" id="GO:0005829">
    <property type="term" value="C:cytosol"/>
    <property type="evidence" value="ECO:0007669"/>
    <property type="project" value="TreeGrafter"/>
</dbReference>
<dbReference type="GO" id="GO:0043022">
    <property type="term" value="F:ribosome binding"/>
    <property type="evidence" value="ECO:0007669"/>
    <property type="project" value="UniProtKB-UniRule"/>
</dbReference>
<dbReference type="GO" id="GO:0019843">
    <property type="term" value="F:rRNA binding"/>
    <property type="evidence" value="ECO:0007669"/>
    <property type="project" value="UniProtKB-UniRule"/>
</dbReference>
<dbReference type="GO" id="GO:0003743">
    <property type="term" value="F:translation initiation factor activity"/>
    <property type="evidence" value="ECO:0007669"/>
    <property type="project" value="UniProtKB-UniRule"/>
</dbReference>
<dbReference type="CDD" id="cd04451">
    <property type="entry name" value="S1_IF1"/>
    <property type="match status" value="1"/>
</dbReference>
<dbReference type="FunFam" id="2.40.50.140:FF:000002">
    <property type="entry name" value="Translation initiation factor IF-1"/>
    <property type="match status" value="1"/>
</dbReference>
<dbReference type="Gene3D" id="2.40.50.140">
    <property type="entry name" value="Nucleic acid-binding proteins"/>
    <property type="match status" value="1"/>
</dbReference>
<dbReference type="HAMAP" id="MF_00075">
    <property type="entry name" value="IF_1"/>
    <property type="match status" value="1"/>
</dbReference>
<dbReference type="InterPro" id="IPR012340">
    <property type="entry name" value="NA-bd_OB-fold"/>
</dbReference>
<dbReference type="InterPro" id="IPR006196">
    <property type="entry name" value="RNA-binding_domain_S1_IF1"/>
</dbReference>
<dbReference type="InterPro" id="IPR003029">
    <property type="entry name" value="S1_domain"/>
</dbReference>
<dbReference type="InterPro" id="IPR004368">
    <property type="entry name" value="TIF_IF1"/>
</dbReference>
<dbReference type="NCBIfam" id="TIGR00008">
    <property type="entry name" value="infA"/>
    <property type="match status" value="1"/>
</dbReference>
<dbReference type="PANTHER" id="PTHR33370">
    <property type="entry name" value="TRANSLATION INITIATION FACTOR IF-1, CHLOROPLASTIC"/>
    <property type="match status" value="1"/>
</dbReference>
<dbReference type="PANTHER" id="PTHR33370:SF1">
    <property type="entry name" value="TRANSLATION INITIATION FACTOR IF-1, CHLOROPLASTIC"/>
    <property type="match status" value="1"/>
</dbReference>
<dbReference type="Pfam" id="PF01176">
    <property type="entry name" value="eIF-1a"/>
    <property type="match status" value="1"/>
</dbReference>
<dbReference type="SMART" id="SM00316">
    <property type="entry name" value="S1"/>
    <property type="match status" value="1"/>
</dbReference>
<dbReference type="SUPFAM" id="SSF50249">
    <property type="entry name" value="Nucleic acid-binding proteins"/>
    <property type="match status" value="1"/>
</dbReference>
<dbReference type="PROSITE" id="PS50832">
    <property type="entry name" value="S1_IF1_TYPE"/>
    <property type="match status" value="1"/>
</dbReference>
<organism>
    <name type="scientific">Nitratidesulfovibrio vulgaris (strain ATCC 29579 / DSM 644 / CCUG 34227 / NCIMB 8303 / VKM B-1760 / Hildenborough)</name>
    <name type="common">Desulfovibrio vulgaris</name>
    <dbReference type="NCBI Taxonomy" id="882"/>
    <lineage>
        <taxon>Bacteria</taxon>
        <taxon>Pseudomonadati</taxon>
        <taxon>Thermodesulfobacteriota</taxon>
        <taxon>Desulfovibrionia</taxon>
        <taxon>Desulfovibrionales</taxon>
        <taxon>Desulfovibrionaceae</taxon>
        <taxon>Nitratidesulfovibrio</taxon>
    </lineage>
</organism>
<gene>
    <name evidence="1" type="primary">infA1</name>
    <name type="synonym">infA-1</name>
    <name type="ordered locus">DVU_0014</name>
</gene>
<protein>
    <recommendedName>
        <fullName evidence="1">Translation initiation factor IF-1 1</fullName>
    </recommendedName>
</protein>
<proteinExistence type="inferred from homology"/>
<comment type="function">
    <text evidence="1">One of the essential components for the initiation of protein synthesis. Stabilizes the binding of IF-2 and IF-3 on the 30S subunit to which N-formylmethionyl-tRNA(fMet) subsequently binds. Helps modulate mRNA selection, yielding the 30S pre-initiation complex (PIC). Upon addition of the 50S ribosomal subunit IF-1, IF-2 and IF-3 are released leaving the mature 70S translation initiation complex.</text>
</comment>
<comment type="subunit">
    <text evidence="1">Component of the 30S ribosomal translation pre-initiation complex which assembles on the 30S ribosome in the order IF-2 and IF-3, IF-1 and N-formylmethionyl-tRNA(fMet); mRNA recruitment can occur at any time during PIC assembly.</text>
</comment>
<comment type="subcellular location">
    <subcellularLocation>
        <location evidence="1">Cytoplasm</location>
    </subcellularLocation>
</comment>
<comment type="similarity">
    <text evidence="1">Belongs to the IF-1 family.</text>
</comment>
<keyword id="KW-0963">Cytoplasm</keyword>
<keyword id="KW-0396">Initiation factor</keyword>
<keyword id="KW-0648">Protein biosynthesis</keyword>
<keyword id="KW-1185">Reference proteome</keyword>
<keyword id="KW-0694">RNA-binding</keyword>
<keyword id="KW-0699">rRNA-binding</keyword>
<evidence type="ECO:0000255" key="1">
    <source>
        <dbReference type="HAMAP-Rule" id="MF_00075"/>
    </source>
</evidence>
<feature type="chain" id="PRO_0000095783" description="Translation initiation factor IF-1 1">
    <location>
        <begin position="1"/>
        <end position="72"/>
    </location>
</feature>
<feature type="domain" description="S1-like" evidence="1">
    <location>
        <begin position="1"/>
        <end position="72"/>
    </location>
</feature>
<reference key="1">
    <citation type="journal article" date="2004" name="Nat. Biotechnol.">
        <title>The genome sequence of the anaerobic, sulfate-reducing bacterium Desulfovibrio vulgaris Hildenborough.</title>
        <authorList>
            <person name="Heidelberg J.F."/>
            <person name="Seshadri R."/>
            <person name="Haveman S.A."/>
            <person name="Hemme C.L."/>
            <person name="Paulsen I.T."/>
            <person name="Kolonay J.F."/>
            <person name="Eisen J.A."/>
            <person name="Ward N.L."/>
            <person name="Methe B.A."/>
            <person name="Brinkac L.M."/>
            <person name="Daugherty S.C."/>
            <person name="DeBoy R.T."/>
            <person name="Dodson R.J."/>
            <person name="Durkin A.S."/>
            <person name="Madupu R."/>
            <person name="Nelson W.C."/>
            <person name="Sullivan S.A."/>
            <person name="Fouts D.E."/>
            <person name="Haft D.H."/>
            <person name="Selengut J."/>
            <person name="Peterson J.D."/>
            <person name="Davidsen T.M."/>
            <person name="Zafar N."/>
            <person name="Zhou L."/>
            <person name="Radune D."/>
            <person name="Dimitrov G."/>
            <person name="Hance M."/>
            <person name="Tran K."/>
            <person name="Khouri H.M."/>
            <person name="Gill J."/>
            <person name="Utterback T.R."/>
            <person name="Feldblyum T.V."/>
            <person name="Wall J.D."/>
            <person name="Voordouw G."/>
            <person name="Fraser C.M."/>
        </authorList>
    </citation>
    <scope>NUCLEOTIDE SEQUENCE [LARGE SCALE GENOMIC DNA]</scope>
    <source>
        <strain>ATCC 29579 / DSM 644 / CCUG 34227 / NCIMB 8303 / VKM B-1760 / Hildenborough</strain>
    </source>
</reference>
<accession>P61686</accession>
<sequence length="72" mass="8329">MAKEDAIEVDGVVQEALPNAMFRVELQNGHEVLAHISGKMRKFYIRILPGDRVKVELSPYDLKRGRITYRMK</sequence>